<protein>
    <recommendedName>
        <fullName evidence="1">UPF0761 membrane protein YPTB0027</fullName>
    </recommendedName>
</protein>
<reference key="1">
    <citation type="journal article" date="2004" name="Proc. Natl. Acad. Sci. U.S.A.">
        <title>Insights into the evolution of Yersinia pestis through whole-genome comparison with Yersinia pseudotuberculosis.</title>
        <authorList>
            <person name="Chain P.S.G."/>
            <person name="Carniel E."/>
            <person name="Larimer F.W."/>
            <person name="Lamerdin J."/>
            <person name="Stoutland P.O."/>
            <person name="Regala W.M."/>
            <person name="Georgescu A.M."/>
            <person name="Vergez L.M."/>
            <person name="Land M.L."/>
            <person name="Motin V.L."/>
            <person name="Brubaker R.R."/>
            <person name="Fowler J."/>
            <person name="Hinnebusch J."/>
            <person name="Marceau M."/>
            <person name="Medigue C."/>
            <person name="Simonet M."/>
            <person name="Chenal-Francisque V."/>
            <person name="Souza B."/>
            <person name="Dacheux D."/>
            <person name="Elliott J.M."/>
            <person name="Derbise A."/>
            <person name="Hauser L.J."/>
            <person name="Garcia E."/>
        </authorList>
    </citation>
    <scope>NUCLEOTIDE SEQUENCE [LARGE SCALE GENOMIC DNA]</scope>
    <source>
        <strain>IP32953</strain>
    </source>
</reference>
<keyword id="KW-0997">Cell inner membrane</keyword>
<keyword id="KW-1003">Cell membrane</keyword>
<keyword id="KW-0472">Membrane</keyword>
<keyword id="KW-0812">Transmembrane</keyword>
<keyword id="KW-1133">Transmembrane helix</keyword>
<dbReference type="EMBL" id="BX936398">
    <property type="protein sequence ID" value="CAH19267.1"/>
    <property type="molecule type" value="Genomic_DNA"/>
</dbReference>
<dbReference type="RefSeq" id="WP_011191445.1">
    <property type="nucleotide sequence ID" value="NC_006155.1"/>
</dbReference>
<dbReference type="GeneID" id="49788005"/>
<dbReference type="KEGG" id="ypo:BZ17_2568"/>
<dbReference type="KEGG" id="yps:YPTB0027"/>
<dbReference type="PATRIC" id="fig|273123.14.peg.2693"/>
<dbReference type="Proteomes" id="UP000001011">
    <property type="component" value="Chromosome"/>
</dbReference>
<dbReference type="GO" id="GO:0005886">
    <property type="term" value="C:plasma membrane"/>
    <property type="evidence" value="ECO:0007669"/>
    <property type="project" value="UniProtKB-SubCell"/>
</dbReference>
<dbReference type="HAMAP" id="MF_00672">
    <property type="entry name" value="UPF0761"/>
    <property type="match status" value="1"/>
</dbReference>
<dbReference type="InterPro" id="IPR023679">
    <property type="entry name" value="UPF0761_bac"/>
</dbReference>
<dbReference type="InterPro" id="IPR017039">
    <property type="entry name" value="Virul_fac_BrkB"/>
</dbReference>
<dbReference type="NCBIfam" id="NF002457">
    <property type="entry name" value="PRK01637.1"/>
    <property type="match status" value="1"/>
</dbReference>
<dbReference type="NCBIfam" id="TIGR00765">
    <property type="entry name" value="yihY_not_rbn"/>
    <property type="match status" value="1"/>
</dbReference>
<dbReference type="PANTHER" id="PTHR30213">
    <property type="entry name" value="INNER MEMBRANE PROTEIN YHJD"/>
    <property type="match status" value="1"/>
</dbReference>
<dbReference type="PANTHER" id="PTHR30213:SF0">
    <property type="entry name" value="UPF0761 MEMBRANE PROTEIN YIHY"/>
    <property type="match status" value="1"/>
</dbReference>
<dbReference type="Pfam" id="PF03631">
    <property type="entry name" value="Virul_fac_BrkB"/>
    <property type="match status" value="1"/>
</dbReference>
<dbReference type="PIRSF" id="PIRSF035875">
    <property type="entry name" value="RNase_BN"/>
    <property type="match status" value="1"/>
</dbReference>
<feature type="chain" id="PRO_0000201008" description="UPF0761 membrane protein YPTB0027">
    <location>
        <begin position="1"/>
        <end position="294"/>
    </location>
</feature>
<feature type="transmembrane region" description="Helical" evidence="1">
    <location>
        <begin position="44"/>
        <end position="64"/>
    </location>
</feature>
<feature type="transmembrane region" description="Helical" evidence="1">
    <location>
        <begin position="67"/>
        <end position="87"/>
    </location>
</feature>
<feature type="transmembrane region" description="Helical" evidence="1">
    <location>
        <begin position="108"/>
        <end position="128"/>
    </location>
</feature>
<feature type="transmembrane region" description="Helical" evidence="1">
    <location>
        <begin position="136"/>
        <end position="156"/>
    </location>
</feature>
<feature type="transmembrane region" description="Helical" evidence="1">
    <location>
        <begin position="185"/>
        <end position="205"/>
    </location>
</feature>
<feature type="transmembrane region" description="Helical" evidence="1">
    <location>
        <begin position="212"/>
        <end position="232"/>
    </location>
</feature>
<feature type="transmembrane region" description="Helical" evidence="1">
    <location>
        <begin position="246"/>
        <end position="266"/>
    </location>
</feature>
<name>Y027_YERPS</name>
<sequence>MASFRRFRLLSPLKPCVTFGRMLYTRIDKDGLTMLAGHLAYVSLLSLVPLITVIFALFAAFPMFAEISIKLKAFIFANFMPATGDIIQNYLEQFVANSNRMTVVGTCGLIVTALLLIYSVDSVLNIIWRSKIQRSLVFSFAVYWMVLTLGPILVGASMVISSYLLSLHWLAHARVDSMIDEILRVFPLLISWVSFWLLYSVVPTVRVPARDALIGALVAALLFELGKKGFAMYITLFPSYQLIYGVLAVIPILFLWVYWSWCIVLLGAEITVTLGEYRAERHHAKSVITQSPEM</sequence>
<gene>
    <name type="ordered locus">YPTB0027</name>
</gene>
<evidence type="ECO:0000255" key="1">
    <source>
        <dbReference type="HAMAP-Rule" id="MF_00672"/>
    </source>
</evidence>
<accession>Q66GF5</accession>
<proteinExistence type="inferred from homology"/>
<comment type="subcellular location">
    <subcellularLocation>
        <location evidence="1">Cell inner membrane</location>
        <topology evidence="1">Multi-pass membrane protein</topology>
    </subcellularLocation>
</comment>
<comment type="similarity">
    <text evidence="1">Belongs to the UPF0761 family.</text>
</comment>
<organism>
    <name type="scientific">Yersinia pseudotuberculosis serotype I (strain IP32953)</name>
    <dbReference type="NCBI Taxonomy" id="273123"/>
    <lineage>
        <taxon>Bacteria</taxon>
        <taxon>Pseudomonadati</taxon>
        <taxon>Pseudomonadota</taxon>
        <taxon>Gammaproteobacteria</taxon>
        <taxon>Enterobacterales</taxon>
        <taxon>Yersiniaceae</taxon>
        <taxon>Yersinia</taxon>
    </lineage>
</organism>